<proteinExistence type="inferred from homology"/>
<feature type="chain" id="PRO_0000427266" description="ATP-dependent DNA helicase UvrD2">
    <location>
        <begin position="1"/>
        <end position="700"/>
    </location>
</feature>
<feature type="domain" description="UvrD-like helicase ATP-binding" evidence="3">
    <location>
        <begin position="10"/>
        <end position="301"/>
    </location>
</feature>
<feature type="domain" description="UvrD-like helicase C-terminal" evidence="4">
    <location>
        <begin position="302"/>
        <end position="553"/>
    </location>
</feature>
<feature type="domain" description="HRDC" evidence="2">
    <location>
        <begin position="626"/>
        <end position="700"/>
    </location>
</feature>
<feature type="region of interest" description="Disordered" evidence="5">
    <location>
        <begin position="565"/>
        <end position="595"/>
    </location>
</feature>
<feature type="binding site" evidence="3">
    <location>
        <begin position="34"/>
        <end position="39"/>
    </location>
    <ligand>
        <name>ATP</name>
        <dbReference type="ChEBI" id="CHEBI:30616"/>
    </ligand>
</feature>
<feature type="binding site" evidence="1">
    <location>
        <position position="299"/>
    </location>
    <ligand>
        <name>ATP</name>
        <dbReference type="ChEBI" id="CHEBI:30616"/>
    </ligand>
</feature>
<accession>P9WMP8</accession>
<accession>L0TBT8</accession>
<accession>O53344</accession>
<accession>P64320</accession>
<organism>
    <name type="scientific">Mycobacterium tuberculosis (strain CDC 1551 / Oshkosh)</name>
    <dbReference type="NCBI Taxonomy" id="83331"/>
    <lineage>
        <taxon>Bacteria</taxon>
        <taxon>Bacillati</taxon>
        <taxon>Actinomycetota</taxon>
        <taxon>Actinomycetes</taxon>
        <taxon>Mycobacteriales</taxon>
        <taxon>Mycobacteriaceae</taxon>
        <taxon>Mycobacterium</taxon>
        <taxon>Mycobacterium tuberculosis complex</taxon>
    </lineage>
</organism>
<gene>
    <name type="primary">uvrD2</name>
    <name type="ordered locus">MT3291</name>
</gene>
<protein>
    <recommendedName>
        <fullName>ATP-dependent DNA helicase UvrD2</fullName>
        <ecNumber>5.6.2.4</ecNumber>
    </recommendedName>
    <alternativeName>
        <fullName evidence="6">DNA 3'-5' helicase UvrD2</fullName>
    </alternativeName>
</protein>
<reference key="1">
    <citation type="journal article" date="2002" name="J. Bacteriol.">
        <title>Whole-genome comparison of Mycobacterium tuberculosis clinical and laboratory strains.</title>
        <authorList>
            <person name="Fleischmann R.D."/>
            <person name="Alland D."/>
            <person name="Eisen J.A."/>
            <person name="Carpenter L."/>
            <person name="White O."/>
            <person name="Peterson J.D."/>
            <person name="DeBoy R.T."/>
            <person name="Dodson R.J."/>
            <person name="Gwinn M.L."/>
            <person name="Haft D.H."/>
            <person name="Hickey E.K."/>
            <person name="Kolonay J.F."/>
            <person name="Nelson W.C."/>
            <person name="Umayam L.A."/>
            <person name="Ermolaeva M.D."/>
            <person name="Salzberg S.L."/>
            <person name="Delcher A."/>
            <person name="Utterback T.R."/>
            <person name="Weidman J.F."/>
            <person name="Khouri H.M."/>
            <person name="Gill J."/>
            <person name="Mikula A."/>
            <person name="Bishai W."/>
            <person name="Jacobs W.R. Jr."/>
            <person name="Venter J.C."/>
            <person name="Fraser C.M."/>
        </authorList>
    </citation>
    <scope>NUCLEOTIDE SEQUENCE [LARGE SCALE GENOMIC DNA]</scope>
    <source>
        <strain>CDC 1551 / Oshkosh</strain>
    </source>
</reference>
<keyword id="KW-0067">ATP-binding</keyword>
<keyword id="KW-0227">DNA damage</keyword>
<keyword id="KW-0234">DNA repair</keyword>
<keyword id="KW-0238">DNA-binding</keyword>
<keyword id="KW-0347">Helicase</keyword>
<keyword id="KW-0378">Hydrolase</keyword>
<keyword id="KW-0413">Isomerase</keyword>
<keyword id="KW-0547">Nucleotide-binding</keyword>
<keyword id="KW-1185">Reference proteome</keyword>
<dbReference type="EC" id="5.6.2.4"/>
<dbReference type="EMBL" id="AE000516">
    <property type="protein sequence ID" value="AAK47634.1"/>
    <property type="molecule type" value="Genomic_DNA"/>
</dbReference>
<dbReference type="PIR" id="D70951">
    <property type="entry name" value="D70951"/>
</dbReference>
<dbReference type="RefSeq" id="WP_003416822.1">
    <property type="nucleotide sequence ID" value="NZ_KK341227.1"/>
</dbReference>
<dbReference type="SMR" id="P9WMP8"/>
<dbReference type="GeneID" id="45427188"/>
<dbReference type="KEGG" id="mtc:MT3291"/>
<dbReference type="PATRIC" id="fig|83331.31.peg.3544"/>
<dbReference type="HOGENOM" id="CLU_004585_5_6_11"/>
<dbReference type="Proteomes" id="UP000001020">
    <property type="component" value="Chromosome"/>
</dbReference>
<dbReference type="GO" id="GO:0005829">
    <property type="term" value="C:cytosol"/>
    <property type="evidence" value="ECO:0007669"/>
    <property type="project" value="TreeGrafter"/>
</dbReference>
<dbReference type="GO" id="GO:0033202">
    <property type="term" value="C:DNA helicase complex"/>
    <property type="evidence" value="ECO:0007669"/>
    <property type="project" value="TreeGrafter"/>
</dbReference>
<dbReference type="GO" id="GO:0043138">
    <property type="term" value="F:3'-5' DNA helicase activity"/>
    <property type="evidence" value="ECO:0007669"/>
    <property type="project" value="TreeGrafter"/>
</dbReference>
<dbReference type="GO" id="GO:0005524">
    <property type="term" value="F:ATP binding"/>
    <property type="evidence" value="ECO:0007669"/>
    <property type="project" value="UniProtKB-KW"/>
</dbReference>
<dbReference type="GO" id="GO:0016887">
    <property type="term" value="F:ATP hydrolysis activity"/>
    <property type="evidence" value="ECO:0007669"/>
    <property type="project" value="RHEA"/>
</dbReference>
<dbReference type="GO" id="GO:0003677">
    <property type="term" value="F:DNA binding"/>
    <property type="evidence" value="ECO:0007669"/>
    <property type="project" value="UniProtKB-KW"/>
</dbReference>
<dbReference type="GO" id="GO:0000725">
    <property type="term" value="P:recombinational repair"/>
    <property type="evidence" value="ECO:0007669"/>
    <property type="project" value="TreeGrafter"/>
</dbReference>
<dbReference type="CDD" id="cd17932">
    <property type="entry name" value="DEXQc_UvrD"/>
    <property type="match status" value="1"/>
</dbReference>
<dbReference type="CDD" id="cd18807">
    <property type="entry name" value="SF1_C_UvrD"/>
    <property type="match status" value="1"/>
</dbReference>
<dbReference type="FunFam" id="1.10.150.80:FF:000002">
    <property type="entry name" value="ATP-dependent DNA helicase RecQ"/>
    <property type="match status" value="1"/>
</dbReference>
<dbReference type="FunFam" id="3.40.50.300:FF:001201">
    <property type="entry name" value="ATP-dependent DNA helicase UvrD2"/>
    <property type="match status" value="1"/>
</dbReference>
<dbReference type="FunFam" id="3.40.50.300:FF:001181">
    <property type="entry name" value="DNA helicase"/>
    <property type="match status" value="1"/>
</dbReference>
<dbReference type="Gene3D" id="1.10.10.160">
    <property type="match status" value="1"/>
</dbReference>
<dbReference type="Gene3D" id="1.10.150.80">
    <property type="entry name" value="HRDC domain"/>
    <property type="match status" value="1"/>
</dbReference>
<dbReference type="Gene3D" id="3.40.50.300">
    <property type="entry name" value="P-loop containing nucleotide triphosphate hydrolases"/>
    <property type="match status" value="3"/>
</dbReference>
<dbReference type="InterPro" id="IPR013986">
    <property type="entry name" value="DExx_box_DNA_helicase_dom_sf"/>
</dbReference>
<dbReference type="InterPro" id="IPR014017">
    <property type="entry name" value="DNA_helicase_UvrD-like_C"/>
</dbReference>
<dbReference type="InterPro" id="IPR000212">
    <property type="entry name" value="DNA_helicase_UvrD/REP"/>
</dbReference>
<dbReference type="InterPro" id="IPR010997">
    <property type="entry name" value="HRDC-like_sf"/>
</dbReference>
<dbReference type="InterPro" id="IPR002121">
    <property type="entry name" value="HRDC_dom"/>
</dbReference>
<dbReference type="InterPro" id="IPR044876">
    <property type="entry name" value="HRDC_dom_sf"/>
</dbReference>
<dbReference type="InterPro" id="IPR027417">
    <property type="entry name" value="P-loop_NTPase"/>
</dbReference>
<dbReference type="InterPro" id="IPR014016">
    <property type="entry name" value="UvrD-like_ATP-bd"/>
</dbReference>
<dbReference type="PANTHER" id="PTHR11070:SF69">
    <property type="entry name" value="ATP-DEPENDENT DNA HELICASE UVRD2"/>
    <property type="match status" value="1"/>
</dbReference>
<dbReference type="PANTHER" id="PTHR11070">
    <property type="entry name" value="UVRD / RECB / PCRA DNA HELICASE FAMILY MEMBER"/>
    <property type="match status" value="1"/>
</dbReference>
<dbReference type="Pfam" id="PF00570">
    <property type="entry name" value="HRDC"/>
    <property type="match status" value="1"/>
</dbReference>
<dbReference type="Pfam" id="PF00580">
    <property type="entry name" value="UvrD-helicase"/>
    <property type="match status" value="1"/>
</dbReference>
<dbReference type="Pfam" id="PF13361">
    <property type="entry name" value="UvrD_C"/>
    <property type="match status" value="2"/>
</dbReference>
<dbReference type="SMART" id="SM00341">
    <property type="entry name" value="HRDC"/>
    <property type="match status" value="1"/>
</dbReference>
<dbReference type="SUPFAM" id="SSF47819">
    <property type="entry name" value="HRDC-like"/>
    <property type="match status" value="1"/>
</dbReference>
<dbReference type="SUPFAM" id="SSF52540">
    <property type="entry name" value="P-loop containing nucleoside triphosphate hydrolases"/>
    <property type="match status" value="1"/>
</dbReference>
<dbReference type="PROSITE" id="PS50967">
    <property type="entry name" value="HRDC"/>
    <property type="match status" value="1"/>
</dbReference>
<dbReference type="PROSITE" id="PS51198">
    <property type="entry name" value="UVRD_HELICASE_ATP_BIND"/>
    <property type="match status" value="1"/>
</dbReference>
<dbReference type="PROSITE" id="PS51217">
    <property type="entry name" value="UVRD_HELICASE_CTER"/>
    <property type="match status" value="1"/>
</dbReference>
<comment type="function">
    <text evidence="1">DNA-dependent ATPase, stimulated equally by ss- and dsDNA. Has both ATPase and helicase activities, and translocates along ssDNA displacing bound streptavidin. Its essentiality for growth does not depend on its helicase activity (By similarity).</text>
</comment>
<comment type="catalytic activity">
    <reaction>
        <text>Couples ATP hydrolysis with the unwinding of duplex DNA by translocating in the 3'-5' direction.</text>
        <dbReference type="EC" id="5.6.2.4"/>
    </reaction>
</comment>
<comment type="catalytic activity">
    <reaction>
        <text>ATP + H2O = ADP + phosphate + H(+)</text>
        <dbReference type="Rhea" id="RHEA:13065"/>
        <dbReference type="ChEBI" id="CHEBI:15377"/>
        <dbReference type="ChEBI" id="CHEBI:15378"/>
        <dbReference type="ChEBI" id="CHEBI:30616"/>
        <dbReference type="ChEBI" id="CHEBI:43474"/>
        <dbReference type="ChEBI" id="CHEBI:456216"/>
        <dbReference type="EC" id="5.6.2.4"/>
    </reaction>
</comment>
<comment type="cofactor">
    <cofactor evidence="1">
        <name>Mg(2+)</name>
        <dbReference type="ChEBI" id="CHEBI:18420"/>
    </cofactor>
</comment>
<comment type="similarity">
    <text evidence="6">Belongs to the helicase family. UvrD subfamily.</text>
</comment>
<sequence>MSIASDPLIAGLDDQQREAVLAPRGPVCVLAGAGTGKTRTITHRIASLVASGHVAAGQVLAVTFTQRAAGEMRSRLRALDAAARTGSGVGAVQALTFHAAAYRQLRYFWSRVIADTGWQLLDSKFAVVARAASRTRLHASTDDVRDLAGEIEWAKASLIGPEEYVTAVAAARRDPPLDAAQIAAVYSEYEALKARGDGVTLLDFDDLLLHTAAAIENDAAVAEEFQDRYRCFVVDEYQDVTPLQQRVLSAWLGDRDDLTVVGDANQTIYSFTGASPRFLLDFSRRFPDAAVVRLERDYRSTPQVVSLANRVIAAARGRVAGSKLRLSGQREPGPVPSFHEHSDEPAEAATVAASIARLIASGTPPSEVAILYRVNAQSEVYEEALTQAGIAYQVRGGEGFFNRQEIKQALLALQRVSERDTDAALSDVVRAVLAPLGLTAQPPVGTRARERWEALTALAELVDDELAQRPALQLPGLLAELRRRAEARHPPVVQGVTLASLHAAKGLEWDAVFLVGLADGTLPISHALAHGPNSEPVEEERRLLYVGITRARVHLALSWALSRSPGGRQSRKPSRFLNGIAPQTRADPVPGTSRRNRGAAARCRICNNELNTSAAVMLRRCETCAADVDEELLLQLKSWRLSTAKEQNVPAYVVFTDNTLIAIAELLPTDDAALIAIPGIGARKLEQYGSDVLQLVRGRT</sequence>
<name>UVRD2_MYCTO</name>
<evidence type="ECO:0000250" key="1"/>
<evidence type="ECO:0000255" key="2">
    <source>
        <dbReference type="PROSITE-ProRule" id="PRU00328"/>
    </source>
</evidence>
<evidence type="ECO:0000255" key="3">
    <source>
        <dbReference type="PROSITE-ProRule" id="PRU00560"/>
    </source>
</evidence>
<evidence type="ECO:0000255" key="4">
    <source>
        <dbReference type="PROSITE-ProRule" id="PRU00617"/>
    </source>
</evidence>
<evidence type="ECO:0000256" key="5">
    <source>
        <dbReference type="SAM" id="MobiDB-lite"/>
    </source>
</evidence>
<evidence type="ECO:0000305" key="6"/>